<keyword id="KW-0004">4Fe-4S</keyword>
<keyword id="KW-0408">Iron</keyword>
<keyword id="KW-0411">Iron-sulfur</keyword>
<keyword id="KW-0479">Metal-binding</keyword>
<keyword id="KW-0489">Methyltransferase</keyword>
<keyword id="KW-0698">rRNA processing</keyword>
<keyword id="KW-0949">S-adenosyl-L-methionine</keyword>
<keyword id="KW-0808">Transferase</keyword>
<dbReference type="EC" id="2.1.1.190" evidence="1"/>
<dbReference type="EMBL" id="CP000076">
    <property type="protein sequence ID" value="AAY93698.1"/>
    <property type="molecule type" value="Genomic_DNA"/>
</dbReference>
<dbReference type="RefSeq" id="WP_011062710.1">
    <property type="nucleotide sequence ID" value="NC_004129.6"/>
</dbReference>
<dbReference type="SMR" id="Q4K898"/>
<dbReference type="STRING" id="220664.PFL_4447"/>
<dbReference type="KEGG" id="pfl:PFL_4447"/>
<dbReference type="PATRIC" id="fig|220664.5.peg.4552"/>
<dbReference type="eggNOG" id="COG2265">
    <property type="taxonomic scope" value="Bacteria"/>
</dbReference>
<dbReference type="HOGENOM" id="CLU_014689_8_2_6"/>
<dbReference type="Proteomes" id="UP000008540">
    <property type="component" value="Chromosome"/>
</dbReference>
<dbReference type="GO" id="GO:0051539">
    <property type="term" value="F:4 iron, 4 sulfur cluster binding"/>
    <property type="evidence" value="ECO:0007669"/>
    <property type="project" value="UniProtKB-KW"/>
</dbReference>
<dbReference type="GO" id="GO:0005506">
    <property type="term" value="F:iron ion binding"/>
    <property type="evidence" value="ECO:0007669"/>
    <property type="project" value="UniProtKB-UniRule"/>
</dbReference>
<dbReference type="GO" id="GO:0003723">
    <property type="term" value="F:RNA binding"/>
    <property type="evidence" value="ECO:0007669"/>
    <property type="project" value="InterPro"/>
</dbReference>
<dbReference type="GO" id="GO:0070041">
    <property type="term" value="F:rRNA (uridine-C5-)-methyltransferase activity"/>
    <property type="evidence" value="ECO:0007669"/>
    <property type="project" value="UniProtKB-UniRule"/>
</dbReference>
<dbReference type="GO" id="GO:0070475">
    <property type="term" value="P:rRNA base methylation"/>
    <property type="evidence" value="ECO:0007669"/>
    <property type="project" value="TreeGrafter"/>
</dbReference>
<dbReference type="CDD" id="cd02440">
    <property type="entry name" value="AdoMet_MTases"/>
    <property type="match status" value="1"/>
</dbReference>
<dbReference type="FunFam" id="3.40.50.150:FF:000009">
    <property type="entry name" value="23S rRNA (Uracil(1939)-C(5))-methyltransferase RlmD"/>
    <property type="match status" value="1"/>
</dbReference>
<dbReference type="Gene3D" id="2.40.50.1070">
    <property type="match status" value="1"/>
</dbReference>
<dbReference type="Gene3D" id="2.40.50.140">
    <property type="entry name" value="Nucleic acid-binding proteins"/>
    <property type="match status" value="1"/>
</dbReference>
<dbReference type="Gene3D" id="3.40.50.150">
    <property type="entry name" value="Vaccinia Virus protein VP39"/>
    <property type="match status" value="1"/>
</dbReference>
<dbReference type="HAMAP" id="MF_01010">
    <property type="entry name" value="23SrRNA_methyltr_RlmD"/>
    <property type="match status" value="1"/>
</dbReference>
<dbReference type="InterPro" id="IPR001566">
    <property type="entry name" value="23S_rRNA_MeTrfase_RlmD"/>
</dbReference>
<dbReference type="InterPro" id="IPR030390">
    <property type="entry name" value="MeTrfase_TrmA_AS"/>
</dbReference>
<dbReference type="InterPro" id="IPR030391">
    <property type="entry name" value="MeTrfase_TrmA_CS"/>
</dbReference>
<dbReference type="InterPro" id="IPR012340">
    <property type="entry name" value="NA-bd_OB-fold"/>
</dbReference>
<dbReference type="InterPro" id="IPR029063">
    <property type="entry name" value="SAM-dependent_MTases_sf"/>
</dbReference>
<dbReference type="InterPro" id="IPR002792">
    <property type="entry name" value="TRAM_dom"/>
</dbReference>
<dbReference type="InterPro" id="IPR010280">
    <property type="entry name" value="U5_MeTrfase_fam"/>
</dbReference>
<dbReference type="NCBIfam" id="NF009639">
    <property type="entry name" value="PRK13168.1"/>
    <property type="match status" value="1"/>
</dbReference>
<dbReference type="NCBIfam" id="TIGR00479">
    <property type="entry name" value="rumA"/>
    <property type="match status" value="1"/>
</dbReference>
<dbReference type="PANTHER" id="PTHR11061:SF49">
    <property type="entry name" value="23S RRNA (URACIL(1939)-C(5))-METHYLTRANSFERASE RLMD"/>
    <property type="match status" value="1"/>
</dbReference>
<dbReference type="PANTHER" id="PTHR11061">
    <property type="entry name" value="RNA M5U METHYLTRANSFERASE"/>
    <property type="match status" value="1"/>
</dbReference>
<dbReference type="Pfam" id="PF01938">
    <property type="entry name" value="TRAM"/>
    <property type="match status" value="1"/>
</dbReference>
<dbReference type="Pfam" id="PF05958">
    <property type="entry name" value="tRNA_U5-meth_tr"/>
    <property type="match status" value="1"/>
</dbReference>
<dbReference type="SUPFAM" id="SSF50249">
    <property type="entry name" value="Nucleic acid-binding proteins"/>
    <property type="match status" value="1"/>
</dbReference>
<dbReference type="SUPFAM" id="SSF53335">
    <property type="entry name" value="S-adenosyl-L-methionine-dependent methyltransferases"/>
    <property type="match status" value="1"/>
</dbReference>
<dbReference type="PROSITE" id="PS51687">
    <property type="entry name" value="SAM_MT_RNA_M5U"/>
    <property type="match status" value="1"/>
</dbReference>
<dbReference type="PROSITE" id="PS50926">
    <property type="entry name" value="TRAM"/>
    <property type="match status" value="1"/>
</dbReference>
<dbReference type="PROSITE" id="PS01230">
    <property type="entry name" value="TRMA_1"/>
    <property type="match status" value="1"/>
</dbReference>
<dbReference type="PROSITE" id="PS01231">
    <property type="entry name" value="TRMA_2"/>
    <property type="match status" value="1"/>
</dbReference>
<name>RLMD_PSEF5</name>
<gene>
    <name evidence="1" type="primary">rlmD</name>
    <name type="synonym">rumA</name>
    <name type="ordered locus">PFL_4447</name>
</gene>
<feature type="chain" id="PRO_0000229876" description="23S rRNA (uracil(1939)-C(5))-methyltransferase RlmD">
    <location>
        <begin position="1"/>
        <end position="450"/>
    </location>
</feature>
<feature type="domain" description="TRAM" evidence="1">
    <location>
        <begin position="20"/>
        <end position="78"/>
    </location>
</feature>
<feature type="region of interest" description="Disordered" evidence="2">
    <location>
        <begin position="1"/>
        <end position="22"/>
    </location>
</feature>
<feature type="active site" description="Nucleophile" evidence="1">
    <location>
        <position position="407"/>
    </location>
</feature>
<feature type="binding site" evidence="1">
    <location>
        <position position="91"/>
    </location>
    <ligand>
        <name>[4Fe-4S] cluster</name>
        <dbReference type="ChEBI" id="CHEBI:49883"/>
    </ligand>
</feature>
<feature type="binding site" evidence="1">
    <location>
        <position position="97"/>
    </location>
    <ligand>
        <name>[4Fe-4S] cluster</name>
        <dbReference type="ChEBI" id="CHEBI:49883"/>
    </ligand>
</feature>
<feature type="binding site" evidence="1">
    <location>
        <position position="100"/>
    </location>
    <ligand>
        <name>[4Fe-4S] cluster</name>
        <dbReference type="ChEBI" id="CHEBI:49883"/>
    </ligand>
</feature>
<feature type="binding site" evidence="1">
    <location>
        <position position="179"/>
    </location>
    <ligand>
        <name>[4Fe-4S] cluster</name>
        <dbReference type="ChEBI" id="CHEBI:49883"/>
    </ligand>
</feature>
<feature type="binding site" evidence="1">
    <location>
        <position position="283"/>
    </location>
    <ligand>
        <name>S-adenosyl-L-methionine</name>
        <dbReference type="ChEBI" id="CHEBI:59789"/>
    </ligand>
</feature>
<feature type="binding site" evidence="1">
    <location>
        <position position="312"/>
    </location>
    <ligand>
        <name>S-adenosyl-L-methionine</name>
        <dbReference type="ChEBI" id="CHEBI:59789"/>
    </ligand>
</feature>
<feature type="binding site" evidence="1">
    <location>
        <position position="317"/>
    </location>
    <ligand>
        <name>S-adenosyl-L-methionine</name>
        <dbReference type="ChEBI" id="CHEBI:59789"/>
    </ligand>
</feature>
<feature type="binding site" evidence="1">
    <location>
        <position position="333"/>
    </location>
    <ligand>
        <name>S-adenosyl-L-methionine</name>
        <dbReference type="ChEBI" id="CHEBI:59789"/>
    </ligand>
</feature>
<feature type="binding site" evidence="1">
    <location>
        <position position="360"/>
    </location>
    <ligand>
        <name>S-adenosyl-L-methionine</name>
        <dbReference type="ChEBI" id="CHEBI:59789"/>
    </ligand>
</feature>
<feature type="binding site" evidence="1">
    <location>
        <position position="381"/>
    </location>
    <ligand>
        <name>S-adenosyl-L-methionine</name>
        <dbReference type="ChEBI" id="CHEBI:59789"/>
    </ligand>
</feature>
<accession>Q4K898</accession>
<organism>
    <name type="scientific">Pseudomonas fluorescens (strain ATCC BAA-477 / NRRL B-23932 / Pf-5)</name>
    <dbReference type="NCBI Taxonomy" id="220664"/>
    <lineage>
        <taxon>Bacteria</taxon>
        <taxon>Pseudomonadati</taxon>
        <taxon>Pseudomonadota</taxon>
        <taxon>Gammaproteobacteria</taxon>
        <taxon>Pseudomonadales</taxon>
        <taxon>Pseudomonadaceae</taxon>
        <taxon>Pseudomonas</taxon>
    </lineage>
</organism>
<sequence>MAKHDRGLRFQPAGGSRAPQIPVGKKQRLTIQRLANDGRGIAFVEGRTWFVSGALAGEEVEARVLGSHGKVVEARAERIFNASDLRRPAACAHAGRCGGCSVQHLPHDEQLALKQRMLAEQLSKVAGVEPEAWAAPLSGPEFGYRRRARVAVRWDAKGKQLEVGFRAAGSQDIVAIDDCPVLVQALQPVMNRLPAMLRRLSKPQALGHVELFSGSALAVLLRHMAPLSDSDLTILKDFCDFHQAQLWLHGEGEPQPFDPSQALGYRLETWDLHLAYRPGDFVQVNAGVNEAMVAQALEWLAPQADERVLDLFCGLGNFALPLARQVREVVAVEGVATMVARAAENAASNNLHNTRFFQADLSQPLSAAEWADEGFSAVLLDPPRDGAFEVVRQLATLGAKRLVYVSCNPATLARDTVELIKQGYRLKRAGILDMFPQTAHVEAMALFEAS</sequence>
<reference key="1">
    <citation type="journal article" date="2005" name="Nat. Biotechnol.">
        <title>Complete genome sequence of the plant commensal Pseudomonas fluorescens Pf-5.</title>
        <authorList>
            <person name="Paulsen I.T."/>
            <person name="Press C.M."/>
            <person name="Ravel J."/>
            <person name="Kobayashi D.Y."/>
            <person name="Myers G.S.A."/>
            <person name="Mavrodi D.V."/>
            <person name="DeBoy R.T."/>
            <person name="Seshadri R."/>
            <person name="Ren Q."/>
            <person name="Madupu R."/>
            <person name="Dodson R.J."/>
            <person name="Durkin A.S."/>
            <person name="Brinkac L.M."/>
            <person name="Daugherty S.C."/>
            <person name="Sullivan S.A."/>
            <person name="Rosovitz M.J."/>
            <person name="Gwinn M.L."/>
            <person name="Zhou L."/>
            <person name="Schneider D.J."/>
            <person name="Cartinhour S.W."/>
            <person name="Nelson W.C."/>
            <person name="Weidman J."/>
            <person name="Watkins K."/>
            <person name="Tran K."/>
            <person name="Khouri H."/>
            <person name="Pierson E.A."/>
            <person name="Pierson L.S. III"/>
            <person name="Thomashow L.S."/>
            <person name="Loper J.E."/>
        </authorList>
    </citation>
    <scope>NUCLEOTIDE SEQUENCE [LARGE SCALE GENOMIC DNA]</scope>
    <source>
        <strain>ATCC BAA-477 / NRRL B-23932 / Pf-5</strain>
    </source>
</reference>
<comment type="function">
    <text evidence="1">Catalyzes the formation of 5-methyl-uridine at position 1939 (m5U1939) in 23S rRNA.</text>
</comment>
<comment type="catalytic activity">
    <reaction evidence="1">
        <text>uridine(1939) in 23S rRNA + S-adenosyl-L-methionine = 5-methyluridine(1939) in 23S rRNA + S-adenosyl-L-homocysteine + H(+)</text>
        <dbReference type="Rhea" id="RHEA:42908"/>
        <dbReference type="Rhea" id="RHEA-COMP:10278"/>
        <dbReference type="Rhea" id="RHEA-COMP:10279"/>
        <dbReference type="ChEBI" id="CHEBI:15378"/>
        <dbReference type="ChEBI" id="CHEBI:57856"/>
        <dbReference type="ChEBI" id="CHEBI:59789"/>
        <dbReference type="ChEBI" id="CHEBI:65315"/>
        <dbReference type="ChEBI" id="CHEBI:74447"/>
        <dbReference type="EC" id="2.1.1.190"/>
    </reaction>
</comment>
<comment type="similarity">
    <text evidence="1">Belongs to the class I-like SAM-binding methyltransferase superfamily. RNA M5U methyltransferase family. RlmD subfamily.</text>
</comment>
<evidence type="ECO:0000255" key="1">
    <source>
        <dbReference type="HAMAP-Rule" id="MF_01010"/>
    </source>
</evidence>
<evidence type="ECO:0000256" key="2">
    <source>
        <dbReference type="SAM" id="MobiDB-lite"/>
    </source>
</evidence>
<proteinExistence type="inferred from homology"/>
<protein>
    <recommendedName>
        <fullName evidence="1">23S rRNA (uracil(1939)-C(5))-methyltransferase RlmD</fullName>
        <ecNumber evidence="1">2.1.1.190</ecNumber>
    </recommendedName>
    <alternativeName>
        <fullName evidence="1">23S rRNA(m5U1939)-methyltransferase</fullName>
    </alternativeName>
</protein>